<evidence type="ECO:0000255" key="1">
    <source>
        <dbReference type="HAMAP-Rule" id="MF_01661"/>
    </source>
</evidence>
<sequence length="139" mass="15189">MKKGTVLNSEISSVISRLGHTDTLVVCDAGLPIPNSTARIDMALTQGVPSFMQVVDVVTREMQVEAAILATEIKQQNPQLHETLLTHLEQLQQHQGNTIKISYTTHEQFKKLTADSQAVIRSGECSPYANVILCAGVTF</sequence>
<keyword id="KW-0119">Carbohydrate metabolism</keyword>
<keyword id="KW-0963">Cytoplasm</keyword>
<keyword id="KW-0413">Isomerase</keyword>
<name>RBSD_SALCH</name>
<gene>
    <name evidence="1" type="primary">rbsD</name>
    <name type="ordered locus">SCH_3794</name>
</gene>
<feature type="chain" id="PRO_0000346249" description="D-ribose pyranase">
    <location>
        <begin position="1"/>
        <end position="139"/>
    </location>
</feature>
<feature type="active site" description="Proton donor" evidence="1">
    <location>
        <position position="20"/>
    </location>
</feature>
<feature type="binding site" evidence="1">
    <location>
        <position position="28"/>
    </location>
    <ligand>
        <name>substrate</name>
    </ligand>
</feature>
<feature type="binding site" evidence="1">
    <location>
        <position position="106"/>
    </location>
    <ligand>
        <name>substrate</name>
    </ligand>
</feature>
<feature type="binding site" evidence="1">
    <location>
        <begin position="128"/>
        <end position="130"/>
    </location>
    <ligand>
        <name>substrate</name>
    </ligand>
</feature>
<dbReference type="EC" id="5.4.99.62" evidence="1"/>
<dbReference type="EMBL" id="AE017220">
    <property type="protein sequence ID" value="AAX67700.1"/>
    <property type="molecule type" value="Genomic_DNA"/>
</dbReference>
<dbReference type="RefSeq" id="WP_000715944.1">
    <property type="nucleotide sequence ID" value="NC_006905.1"/>
</dbReference>
<dbReference type="SMR" id="Q57HW2"/>
<dbReference type="KEGG" id="sec:SCH_3794"/>
<dbReference type="HOGENOM" id="CLU_135498_0_0_6"/>
<dbReference type="UniPathway" id="UPA00916">
    <property type="reaction ID" value="UER00888"/>
</dbReference>
<dbReference type="Proteomes" id="UP000000538">
    <property type="component" value="Chromosome"/>
</dbReference>
<dbReference type="GO" id="GO:0005829">
    <property type="term" value="C:cytosol"/>
    <property type="evidence" value="ECO:0007669"/>
    <property type="project" value="TreeGrafter"/>
</dbReference>
<dbReference type="GO" id="GO:0062193">
    <property type="term" value="F:D-ribose pyranase activity"/>
    <property type="evidence" value="ECO:0007669"/>
    <property type="project" value="UniProtKB-EC"/>
</dbReference>
<dbReference type="GO" id="GO:0016872">
    <property type="term" value="F:intramolecular lyase activity"/>
    <property type="evidence" value="ECO:0007669"/>
    <property type="project" value="UniProtKB-UniRule"/>
</dbReference>
<dbReference type="GO" id="GO:0048029">
    <property type="term" value="F:monosaccharide binding"/>
    <property type="evidence" value="ECO:0007669"/>
    <property type="project" value="InterPro"/>
</dbReference>
<dbReference type="GO" id="GO:0019303">
    <property type="term" value="P:D-ribose catabolic process"/>
    <property type="evidence" value="ECO:0007669"/>
    <property type="project" value="UniProtKB-UniRule"/>
</dbReference>
<dbReference type="FunFam" id="3.40.1650.10:FF:000002">
    <property type="entry name" value="D-ribose pyranase"/>
    <property type="match status" value="1"/>
</dbReference>
<dbReference type="Gene3D" id="3.40.1650.10">
    <property type="entry name" value="RbsD-like domain"/>
    <property type="match status" value="1"/>
</dbReference>
<dbReference type="HAMAP" id="MF_01661">
    <property type="entry name" value="D_rib_pyranase"/>
    <property type="match status" value="1"/>
</dbReference>
<dbReference type="InterPro" id="IPR023064">
    <property type="entry name" value="D-ribose_pyranase"/>
</dbReference>
<dbReference type="InterPro" id="IPR023750">
    <property type="entry name" value="RbsD-like_sf"/>
</dbReference>
<dbReference type="InterPro" id="IPR007721">
    <property type="entry name" value="RbsD_FucU"/>
</dbReference>
<dbReference type="NCBIfam" id="NF008761">
    <property type="entry name" value="PRK11797.1"/>
    <property type="match status" value="1"/>
</dbReference>
<dbReference type="PANTHER" id="PTHR37831">
    <property type="entry name" value="D-RIBOSE PYRANASE"/>
    <property type="match status" value="1"/>
</dbReference>
<dbReference type="PANTHER" id="PTHR37831:SF1">
    <property type="entry name" value="D-RIBOSE PYRANASE"/>
    <property type="match status" value="1"/>
</dbReference>
<dbReference type="Pfam" id="PF05025">
    <property type="entry name" value="RbsD_FucU"/>
    <property type="match status" value="1"/>
</dbReference>
<dbReference type="SUPFAM" id="SSF102546">
    <property type="entry name" value="RbsD-like"/>
    <property type="match status" value="1"/>
</dbReference>
<protein>
    <recommendedName>
        <fullName evidence="1">D-ribose pyranase</fullName>
        <ecNumber evidence="1">5.4.99.62</ecNumber>
    </recommendedName>
</protein>
<proteinExistence type="inferred from homology"/>
<comment type="function">
    <text evidence="1">Catalyzes the interconversion of beta-pyran and beta-furan forms of D-ribose.</text>
</comment>
<comment type="catalytic activity">
    <reaction evidence="1">
        <text>beta-D-ribopyranose = beta-D-ribofuranose</text>
        <dbReference type="Rhea" id="RHEA:25432"/>
        <dbReference type="ChEBI" id="CHEBI:27476"/>
        <dbReference type="ChEBI" id="CHEBI:47002"/>
        <dbReference type="EC" id="5.4.99.62"/>
    </reaction>
</comment>
<comment type="pathway">
    <text evidence="1">Carbohydrate metabolism; D-ribose degradation; D-ribose 5-phosphate from beta-D-ribopyranose: step 1/2.</text>
</comment>
<comment type="subunit">
    <text evidence="1">Homodecamer.</text>
</comment>
<comment type="subcellular location">
    <subcellularLocation>
        <location evidence="1">Cytoplasm</location>
    </subcellularLocation>
</comment>
<comment type="similarity">
    <text evidence="1">Belongs to the RbsD / FucU family. RbsD subfamily.</text>
</comment>
<accession>Q57HW2</accession>
<organism>
    <name type="scientific">Salmonella choleraesuis (strain SC-B67)</name>
    <dbReference type="NCBI Taxonomy" id="321314"/>
    <lineage>
        <taxon>Bacteria</taxon>
        <taxon>Pseudomonadati</taxon>
        <taxon>Pseudomonadota</taxon>
        <taxon>Gammaproteobacteria</taxon>
        <taxon>Enterobacterales</taxon>
        <taxon>Enterobacteriaceae</taxon>
        <taxon>Salmonella</taxon>
    </lineage>
</organism>
<reference key="1">
    <citation type="journal article" date="2005" name="Nucleic Acids Res.">
        <title>The genome sequence of Salmonella enterica serovar Choleraesuis, a highly invasive and resistant zoonotic pathogen.</title>
        <authorList>
            <person name="Chiu C.-H."/>
            <person name="Tang P."/>
            <person name="Chu C."/>
            <person name="Hu S."/>
            <person name="Bao Q."/>
            <person name="Yu J."/>
            <person name="Chou Y.-Y."/>
            <person name="Wang H.-S."/>
            <person name="Lee Y.-S."/>
        </authorList>
    </citation>
    <scope>NUCLEOTIDE SEQUENCE [LARGE SCALE GENOMIC DNA]</scope>
    <source>
        <strain>SC-B67</strain>
    </source>
</reference>